<proteinExistence type="inferred from homology"/>
<gene>
    <name evidence="1" type="primary">rpiA</name>
    <name type="ordered locus">GOX1708</name>
</gene>
<reference key="1">
    <citation type="journal article" date="2005" name="Nat. Biotechnol.">
        <title>Complete genome sequence of the acetic acid bacterium Gluconobacter oxydans.</title>
        <authorList>
            <person name="Prust C."/>
            <person name="Hoffmeister M."/>
            <person name="Liesegang H."/>
            <person name="Wiezer A."/>
            <person name="Fricke W.F."/>
            <person name="Ehrenreich A."/>
            <person name="Gottschalk G."/>
            <person name="Deppenmeier U."/>
        </authorList>
    </citation>
    <scope>NUCLEOTIDE SEQUENCE [LARGE SCALE GENOMIC DNA]</scope>
    <source>
        <strain>621H</strain>
    </source>
</reference>
<accession>Q5FQ98</accession>
<protein>
    <recommendedName>
        <fullName evidence="1">Ribose-5-phosphate isomerase A</fullName>
        <ecNumber evidence="1">5.3.1.6</ecNumber>
    </recommendedName>
    <alternativeName>
        <fullName evidence="1">Phosphoriboisomerase A</fullName>
        <shortName evidence="1">PRI</shortName>
    </alternativeName>
</protein>
<keyword id="KW-0413">Isomerase</keyword>
<keyword id="KW-1185">Reference proteome</keyword>
<name>RPIA_GLUOX</name>
<comment type="function">
    <text evidence="1">Catalyzes the reversible conversion of ribose-5-phosphate to ribulose 5-phosphate.</text>
</comment>
<comment type="catalytic activity">
    <reaction evidence="1">
        <text>aldehydo-D-ribose 5-phosphate = D-ribulose 5-phosphate</text>
        <dbReference type="Rhea" id="RHEA:14657"/>
        <dbReference type="ChEBI" id="CHEBI:58121"/>
        <dbReference type="ChEBI" id="CHEBI:58273"/>
        <dbReference type="EC" id="5.3.1.6"/>
    </reaction>
</comment>
<comment type="pathway">
    <text evidence="1">Carbohydrate degradation; pentose phosphate pathway; D-ribose 5-phosphate from D-ribulose 5-phosphate (non-oxidative stage): step 1/1.</text>
</comment>
<comment type="subunit">
    <text evidence="1">Homodimer.</text>
</comment>
<comment type="similarity">
    <text evidence="1">Belongs to the ribose 5-phosphate isomerase family.</text>
</comment>
<evidence type="ECO:0000255" key="1">
    <source>
        <dbReference type="HAMAP-Rule" id="MF_00170"/>
    </source>
</evidence>
<feature type="chain" id="PRO_0000158421" description="Ribose-5-phosphate isomerase A">
    <location>
        <begin position="1"/>
        <end position="231"/>
    </location>
</feature>
<feature type="active site" description="Proton acceptor" evidence="1">
    <location>
        <position position="109"/>
    </location>
</feature>
<feature type="binding site" evidence="1">
    <location>
        <begin position="31"/>
        <end position="34"/>
    </location>
    <ligand>
        <name>substrate</name>
    </ligand>
</feature>
<feature type="binding site" evidence="1">
    <location>
        <begin position="86"/>
        <end position="89"/>
    </location>
    <ligand>
        <name>substrate</name>
    </ligand>
</feature>
<feature type="binding site" evidence="1">
    <location>
        <begin position="100"/>
        <end position="103"/>
    </location>
    <ligand>
        <name>substrate</name>
    </ligand>
</feature>
<feature type="binding site" evidence="1">
    <location>
        <position position="127"/>
    </location>
    <ligand>
        <name>substrate</name>
    </ligand>
</feature>
<sequence>MSGTDMNVHKRTAAREAADMVKSGMVVGLGTGSTAAYMIERLGERVAEGLEIFGIPTSDDSEDKALKAGIPLTDFSAHRRIDIAIDGADEVQRGSLNLIKGLGGALLREKIVAQAAKRFVVIVDGTKPVDLLGERAPVPVEVISFGWECTAERLAACGARGVKPRTDRAGSLFVTDTGNMILDCHFGPIEKPEELAEKIDRIVGVVEHGMFLNMASEVLVATPDGVEHWEP</sequence>
<dbReference type="EC" id="5.3.1.6" evidence="1"/>
<dbReference type="EMBL" id="CP000009">
    <property type="protein sequence ID" value="AAW61448.1"/>
    <property type="molecule type" value="Genomic_DNA"/>
</dbReference>
<dbReference type="SMR" id="Q5FQ98"/>
<dbReference type="STRING" id="290633.GOX1708"/>
<dbReference type="KEGG" id="gox:GOX1708"/>
<dbReference type="eggNOG" id="COG0120">
    <property type="taxonomic scope" value="Bacteria"/>
</dbReference>
<dbReference type="HOGENOM" id="CLU_056590_1_0_5"/>
<dbReference type="UniPathway" id="UPA00115">
    <property type="reaction ID" value="UER00412"/>
</dbReference>
<dbReference type="Proteomes" id="UP000006375">
    <property type="component" value="Chromosome"/>
</dbReference>
<dbReference type="GO" id="GO:0004751">
    <property type="term" value="F:ribose-5-phosphate isomerase activity"/>
    <property type="evidence" value="ECO:0007669"/>
    <property type="project" value="UniProtKB-UniRule"/>
</dbReference>
<dbReference type="GO" id="GO:0009052">
    <property type="term" value="P:pentose-phosphate shunt, non-oxidative branch"/>
    <property type="evidence" value="ECO:0007669"/>
    <property type="project" value="UniProtKB-UniRule"/>
</dbReference>
<dbReference type="CDD" id="cd01398">
    <property type="entry name" value="RPI_A"/>
    <property type="match status" value="1"/>
</dbReference>
<dbReference type="FunFam" id="3.40.50.1360:FF:000001">
    <property type="entry name" value="Ribose-5-phosphate isomerase A"/>
    <property type="match status" value="1"/>
</dbReference>
<dbReference type="Gene3D" id="3.30.70.260">
    <property type="match status" value="1"/>
</dbReference>
<dbReference type="Gene3D" id="3.40.50.1360">
    <property type="match status" value="1"/>
</dbReference>
<dbReference type="HAMAP" id="MF_00170">
    <property type="entry name" value="Rib_5P_isom_A"/>
    <property type="match status" value="1"/>
</dbReference>
<dbReference type="InterPro" id="IPR037171">
    <property type="entry name" value="NagB/RpiA_transferase-like"/>
</dbReference>
<dbReference type="InterPro" id="IPR050262">
    <property type="entry name" value="Ribose-5P_isomerase"/>
</dbReference>
<dbReference type="InterPro" id="IPR020672">
    <property type="entry name" value="Ribose5P_isomerase_typA_subgr"/>
</dbReference>
<dbReference type="InterPro" id="IPR004788">
    <property type="entry name" value="Ribose5P_isomerase_type_A"/>
</dbReference>
<dbReference type="NCBIfam" id="NF001924">
    <property type="entry name" value="PRK00702.1"/>
    <property type="match status" value="1"/>
</dbReference>
<dbReference type="NCBIfam" id="TIGR00021">
    <property type="entry name" value="rpiA"/>
    <property type="match status" value="1"/>
</dbReference>
<dbReference type="PANTHER" id="PTHR43748">
    <property type="entry name" value="RIBOSE-5-PHOSPHATE ISOMERASE 3, CHLOROPLASTIC-RELATED"/>
    <property type="match status" value="1"/>
</dbReference>
<dbReference type="PANTHER" id="PTHR43748:SF3">
    <property type="entry name" value="RIBOSE-5-PHOSPHATE ISOMERASE 3, CHLOROPLASTIC-RELATED"/>
    <property type="match status" value="1"/>
</dbReference>
<dbReference type="Pfam" id="PF06026">
    <property type="entry name" value="Rib_5-P_isom_A"/>
    <property type="match status" value="1"/>
</dbReference>
<dbReference type="SUPFAM" id="SSF75445">
    <property type="entry name" value="D-ribose-5-phosphate isomerase (RpiA), lid domain"/>
    <property type="match status" value="1"/>
</dbReference>
<dbReference type="SUPFAM" id="SSF100950">
    <property type="entry name" value="NagB/RpiA/CoA transferase-like"/>
    <property type="match status" value="1"/>
</dbReference>
<organism>
    <name type="scientific">Gluconobacter oxydans (strain 621H)</name>
    <name type="common">Gluconobacter suboxydans</name>
    <dbReference type="NCBI Taxonomy" id="290633"/>
    <lineage>
        <taxon>Bacteria</taxon>
        <taxon>Pseudomonadati</taxon>
        <taxon>Pseudomonadota</taxon>
        <taxon>Alphaproteobacteria</taxon>
        <taxon>Acetobacterales</taxon>
        <taxon>Acetobacteraceae</taxon>
        <taxon>Gluconobacter</taxon>
    </lineage>
</organism>